<evidence type="ECO:0000250" key="1"/>
<evidence type="ECO:0000250" key="2">
    <source>
        <dbReference type="UniProtKB" id="Q06628"/>
    </source>
</evidence>
<evidence type="ECO:0000256" key="3">
    <source>
        <dbReference type="SAM" id="MobiDB-lite"/>
    </source>
</evidence>
<evidence type="ECO:0000269" key="4">
    <source>
    </source>
</evidence>
<evidence type="ECO:0000305" key="5"/>
<sequence length="701" mass="77933">MSSARRPSKLLSEKQSDKLAQIIQNFFLKAAHVIFHFRVAFPSVVLQPDDSYGAMGDTFSQSKYNNRWFNLDLGNYEIPRTELSLWRNKDILSLPPLVLETFLDLRGLSSNQTLMLDDVIVKTSKKSEIVLERWLIEFDLSTFDNEVMEFPSIYKKIIILFRSLYLLAGLLPSYRLRDKLVKSKSKNSAIHVSCRILDGSKPITSKGRIGLSKKLLSEEEHTSSKKLQPVLTPIGALRVSVSYRTNCNFQVSDTEEALSSQFMLDHLPSVRTNYDSDGNSLTSPMDYLQNRVSSASIHWSDQSPRRRSSTRSVQLFKVGSINSSSSPPPGATQSNQSVSSFSTSKPIPVTLNKTNSSASLVPILRQNKDSLPKSIGSMVQNQMQETGHQVSSNSRRFSSSFGSRFRTVSSRNNSLDGQLVVANQPFSTPSNNPILHNFRSRNKSPSVSSTELGPSSSIYMDDDLDSFMKMLDSKPDLRFPSNSPSVYEDPLANFKTFQKSNDFLALEQQQHGSPTSNQIMIHSQSQTSQSQVFKRTVFSDRSRRGSVSSNYSPSSQALRPGASAPMVTPSVTYGKFHASSGSPSNSSLAQYLRHNSSPPASATAVATVHNSLRRLTSSSQRTNTNSTNSSTRPVNPELLKLKSFNEDVFESDDDEHDEHSPRSTDTKSRNTGPSSGHAEDDEDDLLFAMSDMTLAKNNQEF</sequence>
<keyword id="KW-0072">Autophagy</keyword>
<keyword id="KW-0963">Cytoplasm</keyword>
<keyword id="KW-0653">Protein transport</keyword>
<keyword id="KW-0813">Transport</keyword>
<proteinExistence type="inferred from homology"/>
<accession>A7KAJ8</accession>
<comment type="function">
    <text evidence="1 4">Activates the ATG1 kinase in a nutritional condition dependent manner through the TOR pathway, leading to autophagy. Also involved in cytoplasm to vacuole transport (Cvt) and more specifically in Cvt vesicle formation. Seems to play a role in the switching machinery regulating the conversion between the Cvt pathway and autophagy. Finally, ATG13 is also required for glycogen storage during stationary phase (By similarity).</text>
</comment>
<comment type="subunit">
    <text evidence="1">Interacts with ATG1 to form the ATG1-ATG13 kinase complex.</text>
</comment>
<comment type="subcellular location">
    <subcellularLocation>
        <location evidence="2">Cytoplasm</location>
    </subcellularLocation>
    <subcellularLocation>
        <location evidence="2">Preautophagosomal structure</location>
    </subcellularLocation>
</comment>
<comment type="similarity">
    <text evidence="5">Belongs to the ATG13 family. Fungi subfamily.</text>
</comment>
<protein>
    <recommendedName>
        <fullName>Autophagy-related protein 13</fullName>
    </recommendedName>
</protein>
<reference key="1">
    <citation type="journal article" date="2007" name="Autophagy">
        <title>ATG genes involved in non-selective autophagy are conserved from yeast to man, but the selective Cvt and pexophagy pathways also require organism-specific genes.</title>
        <authorList>
            <person name="Meijer W.H."/>
            <person name="van der Klei I.J."/>
            <person name="Veenhuis M."/>
            <person name="Kiel J.A.K.W."/>
        </authorList>
    </citation>
    <scope>NUCLEOTIDE SEQUENCE [GENOMIC DNA]</scope>
    <scope>FUNCTION</scope>
    <source>
        <strain>ATCC 34438 / CBS 4732 / DSM 70277 / JCM 3621 / NBRC 1476 / NRRL Y-5445</strain>
    </source>
</reference>
<organism>
    <name type="scientific">Pichia angusta</name>
    <name type="common">Yeast</name>
    <name type="synonym">Hansenula polymorpha</name>
    <dbReference type="NCBI Taxonomy" id="870730"/>
    <lineage>
        <taxon>Eukaryota</taxon>
        <taxon>Fungi</taxon>
        <taxon>Dikarya</taxon>
        <taxon>Ascomycota</taxon>
        <taxon>Saccharomycotina</taxon>
        <taxon>Pichiomycetes</taxon>
        <taxon>Pichiales</taxon>
        <taxon>Pichiaceae</taxon>
        <taxon>Ogataea</taxon>
    </lineage>
</organism>
<gene>
    <name type="primary">ATG13</name>
</gene>
<dbReference type="EMBL" id="EF107720">
    <property type="protein sequence ID" value="ABO31058.1"/>
    <property type="molecule type" value="Genomic_DNA"/>
</dbReference>
<dbReference type="SMR" id="A7KAJ8"/>
<dbReference type="PhylomeDB" id="A7KAJ8"/>
<dbReference type="GO" id="GO:1990316">
    <property type="term" value="C:Atg1/ULK1 kinase complex"/>
    <property type="evidence" value="ECO:0007669"/>
    <property type="project" value="InterPro"/>
</dbReference>
<dbReference type="GO" id="GO:0005829">
    <property type="term" value="C:cytosol"/>
    <property type="evidence" value="ECO:0007669"/>
    <property type="project" value="TreeGrafter"/>
</dbReference>
<dbReference type="GO" id="GO:0000407">
    <property type="term" value="C:phagophore assembly site"/>
    <property type="evidence" value="ECO:0007669"/>
    <property type="project" value="UniProtKB-SubCell"/>
</dbReference>
<dbReference type="GO" id="GO:0000423">
    <property type="term" value="P:mitophagy"/>
    <property type="evidence" value="ECO:0007669"/>
    <property type="project" value="TreeGrafter"/>
</dbReference>
<dbReference type="GO" id="GO:0034727">
    <property type="term" value="P:piecemeal microautophagy of the nucleus"/>
    <property type="evidence" value="ECO:0007669"/>
    <property type="project" value="TreeGrafter"/>
</dbReference>
<dbReference type="GO" id="GO:0034497">
    <property type="term" value="P:protein localization to phagophore assembly site"/>
    <property type="evidence" value="ECO:0007669"/>
    <property type="project" value="TreeGrafter"/>
</dbReference>
<dbReference type="GO" id="GO:0015031">
    <property type="term" value="P:protein transport"/>
    <property type="evidence" value="ECO:0007669"/>
    <property type="project" value="UniProtKB-KW"/>
</dbReference>
<dbReference type="Gene3D" id="6.10.140.1900">
    <property type="match status" value="1"/>
</dbReference>
<dbReference type="Gene3D" id="3.30.900.10">
    <property type="entry name" value="HORMA domain"/>
    <property type="match status" value="1"/>
</dbReference>
<dbReference type="InterPro" id="IPR040182">
    <property type="entry name" value="ATG13"/>
</dbReference>
<dbReference type="InterPro" id="IPR018731">
    <property type="entry name" value="Atg13_N"/>
</dbReference>
<dbReference type="InterPro" id="IPR036570">
    <property type="entry name" value="HORMA_dom_sf"/>
</dbReference>
<dbReference type="PANTHER" id="PTHR13430">
    <property type="match status" value="1"/>
</dbReference>
<dbReference type="PANTHER" id="PTHR13430:SF4">
    <property type="entry name" value="AUTOPHAGY-RELATED PROTEIN 13"/>
    <property type="match status" value="1"/>
</dbReference>
<dbReference type="Pfam" id="PF10033">
    <property type="entry name" value="ATG13"/>
    <property type="match status" value="1"/>
</dbReference>
<feature type="chain" id="PRO_0000317949" description="Autophagy-related protein 13">
    <location>
        <begin position="1"/>
        <end position="701"/>
    </location>
</feature>
<feature type="region of interest" description="Disordered" evidence="3">
    <location>
        <begin position="319"/>
        <end position="343"/>
    </location>
</feature>
<feature type="region of interest" description="Disordered" evidence="3">
    <location>
        <begin position="521"/>
        <end position="563"/>
    </location>
</feature>
<feature type="region of interest" description="Disordered" evidence="3">
    <location>
        <begin position="577"/>
        <end position="701"/>
    </location>
</feature>
<feature type="compositionally biased region" description="Low complexity" evidence="3">
    <location>
        <begin position="332"/>
        <end position="343"/>
    </location>
</feature>
<feature type="compositionally biased region" description="Polar residues" evidence="3">
    <location>
        <begin position="521"/>
        <end position="533"/>
    </location>
</feature>
<feature type="compositionally biased region" description="Polar residues" evidence="3">
    <location>
        <begin position="545"/>
        <end position="557"/>
    </location>
</feature>
<feature type="compositionally biased region" description="Low complexity" evidence="3">
    <location>
        <begin position="596"/>
        <end position="632"/>
    </location>
</feature>
<feature type="compositionally biased region" description="Acidic residues" evidence="3">
    <location>
        <begin position="647"/>
        <end position="656"/>
    </location>
</feature>
<feature type="compositionally biased region" description="Basic and acidic residues" evidence="3">
    <location>
        <begin position="657"/>
        <end position="668"/>
    </location>
</feature>
<name>ATG13_PICAN</name>